<sequence>MSDEKTQLIEAFYNFDGDYDGFVSVEEFRGIIRDGLPMTEAEITEFFEAADPNNTGFIDYKAFAAMLYSVDES</sequence>
<name>MLCB_DICDI</name>
<protein>
    <recommendedName>
        <fullName>Myosin-IB light chain</fullName>
    </recommendedName>
    <alternativeName>
        <fullName>MyoB light chain</fullName>
    </alternativeName>
    <alternativeName>
        <fullName>Myosin light chain mlcB</fullName>
        <shortName>MlcB</shortName>
    </alternativeName>
</protein>
<organism>
    <name type="scientific">Dictyostelium discoideum</name>
    <name type="common">Social amoeba</name>
    <dbReference type="NCBI Taxonomy" id="44689"/>
    <lineage>
        <taxon>Eukaryota</taxon>
        <taxon>Amoebozoa</taxon>
        <taxon>Evosea</taxon>
        <taxon>Eumycetozoa</taxon>
        <taxon>Dictyostelia</taxon>
        <taxon>Dictyosteliales</taxon>
        <taxon>Dictyosteliaceae</taxon>
        <taxon>Dictyostelium</taxon>
    </lineage>
</organism>
<proteinExistence type="evidence at protein level"/>
<keyword id="KW-0106">Calcium</keyword>
<keyword id="KW-0903">Direct protein sequencing</keyword>
<keyword id="KW-0479">Metal-binding</keyword>
<keyword id="KW-0505">Motor protein</keyword>
<keyword id="KW-0518">Myosin</keyword>
<keyword id="KW-1185">Reference proteome</keyword>
<keyword id="KW-0677">Repeat</keyword>
<reference key="1">
    <citation type="journal article" date="2005" name="Nature">
        <title>The genome of the social amoeba Dictyostelium discoideum.</title>
        <authorList>
            <person name="Eichinger L."/>
            <person name="Pachebat J.A."/>
            <person name="Gloeckner G."/>
            <person name="Rajandream M.A."/>
            <person name="Sucgang R."/>
            <person name="Berriman M."/>
            <person name="Song J."/>
            <person name="Olsen R."/>
            <person name="Szafranski K."/>
            <person name="Xu Q."/>
            <person name="Tunggal B."/>
            <person name="Kummerfeld S."/>
            <person name="Madera M."/>
            <person name="Konfortov B.A."/>
            <person name="Rivero F."/>
            <person name="Bankier A.T."/>
            <person name="Lehmann R."/>
            <person name="Hamlin N."/>
            <person name="Davies R."/>
            <person name="Gaudet P."/>
            <person name="Fey P."/>
            <person name="Pilcher K."/>
            <person name="Chen G."/>
            <person name="Saunders D."/>
            <person name="Sodergren E.J."/>
            <person name="Davis P."/>
            <person name="Kerhornou A."/>
            <person name="Nie X."/>
            <person name="Hall N."/>
            <person name="Anjard C."/>
            <person name="Hemphill L."/>
            <person name="Bason N."/>
            <person name="Farbrother P."/>
            <person name="Desany B."/>
            <person name="Just E."/>
            <person name="Morio T."/>
            <person name="Rost R."/>
            <person name="Churcher C.M."/>
            <person name="Cooper J."/>
            <person name="Haydock S."/>
            <person name="van Driessche N."/>
            <person name="Cronin A."/>
            <person name="Goodhead I."/>
            <person name="Muzny D.M."/>
            <person name="Mourier T."/>
            <person name="Pain A."/>
            <person name="Lu M."/>
            <person name="Harper D."/>
            <person name="Lindsay R."/>
            <person name="Hauser H."/>
            <person name="James K.D."/>
            <person name="Quiles M."/>
            <person name="Madan Babu M."/>
            <person name="Saito T."/>
            <person name="Buchrieser C."/>
            <person name="Wardroper A."/>
            <person name="Felder M."/>
            <person name="Thangavelu M."/>
            <person name="Johnson D."/>
            <person name="Knights A."/>
            <person name="Loulseged H."/>
            <person name="Mungall K.L."/>
            <person name="Oliver K."/>
            <person name="Price C."/>
            <person name="Quail M.A."/>
            <person name="Urushihara H."/>
            <person name="Hernandez J."/>
            <person name="Rabbinowitsch E."/>
            <person name="Steffen D."/>
            <person name="Sanders M."/>
            <person name="Ma J."/>
            <person name="Kohara Y."/>
            <person name="Sharp S."/>
            <person name="Simmonds M.N."/>
            <person name="Spiegler S."/>
            <person name="Tivey A."/>
            <person name="Sugano S."/>
            <person name="White B."/>
            <person name="Walker D."/>
            <person name="Woodward J.R."/>
            <person name="Winckler T."/>
            <person name="Tanaka Y."/>
            <person name="Shaulsky G."/>
            <person name="Schleicher M."/>
            <person name="Weinstock G.M."/>
            <person name="Rosenthal A."/>
            <person name="Cox E.C."/>
            <person name="Chisholm R.L."/>
            <person name="Gibbs R.A."/>
            <person name="Loomis W.F."/>
            <person name="Platzer M."/>
            <person name="Kay R.R."/>
            <person name="Williams J.G."/>
            <person name="Dear P.H."/>
            <person name="Noegel A.A."/>
            <person name="Barrell B.G."/>
            <person name="Kuspa A."/>
        </authorList>
    </citation>
    <scope>NUCLEOTIDE SEQUENCE [LARGE SCALE GENOMIC DNA]</scope>
    <source>
        <strain>AX4</strain>
    </source>
</reference>
<reference key="2">
    <citation type="journal article" date="2006" name="J. Biol. Chem.">
        <title>Identification and characterization of an 8-kDa light chain associated with Dictyostelium discoideum MyoB, a class I myosin.</title>
        <authorList>
            <person name="Crawley S.W."/>
            <person name="de la Roche M.A."/>
            <person name="Lee S.F."/>
            <person name="Li Z."/>
            <person name="Chitayat S."/>
            <person name="Smith S.P."/>
            <person name="Cote G.P."/>
        </authorList>
    </citation>
    <scope>PROTEIN SEQUENCE OF 34-57</scope>
    <scope>FUNCTION</scope>
    <scope>MUTAGENESIS OF ASP-16</scope>
    <scope>SUBUNIT</scope>
</reference>
<dbReference type="EMBL" id="AAFI02000152">
    <property type="protein sequence ID" value="EAL62399.1"/>
    <property type="molecule type" value="Genomic_DNA"/>
</dbReference>
<dbReference type="RefSeq" id="XP_635900.1">
    <property type="nucleotide sequence ID" value="XM_630808.1"/>
</dbReference>
<dbReference type="BMRB" id="Q54GL7"/>
<dbReference type="SMR" id="Q54GL7"/>
<dbReference type="STRING" id="44689.Q54GL7"/>
<dbReference type="PaxDb" id="44689-DDB0233390"/>
<dbReference type="EnsemblProtists" id="EAL62399">
    <property type="protein sequence ID" value="EAL62399"/>
    <property type="gene ID" value="DDB_G0290077"/>
</dbReference>
<dbReference type="GeneID" id="8627466"/>
<dbReference type="KEGG" id="ddi:DDB_G0290077"/>
<dbReference type="dictyBase" id="DDB_G0290077">
    <property type="gene designation" value="mlcB"/>
</dbReference>
<dbReference type="VEuPathDB" id="AmoebaDB:DDB_G0290077"/>
<dbReference type="eggNOG" id="KOG0027">
    <property type="taxonomic scope" value="Eukaryota"/>
</dbReference>
<dbReference type="HOGENOM" id="CLU_061288_22_5_1"/>
<dbReference type="InParanoid" id="Q54GL7"/>
<dbReference type="OMA" id="YNFDHDY"/>
<dbReference type="PRO" id="PR:Q54GL7"/>
<dbReference type="Proteomes" id="UP000002195">
    <property type="component" value="Chromosome 5"/>
</dbReference>
<dbReference type="GO" id="GO:0045160">
    <property type="term" value="C:myosin I complex"/>
    <property type="evidence" value="ECO:0000314"/>
    <property type="project" value="dictyBase"/>
</dbReference>
<dbReference type="GO" id="GO:0005509">
    <property type="term" value="F:calcium ion binding"/>
    <property type="evidence" value="ECO:0000314"/>
    <property type="project" value="dictyBase"/>
</dbReference>
<dbReference type="GO" id="GO:0017024">
    <property type="term" value="F:myosin I binding"/>
    <property type="evidence" value="ECO:0000353"/>
    <property type="project" value="dictyBase"/>
</dbReference>
<dbReference type="CDD" id="cd00051">
    <property type="entry name" value="EFh"/>
    <property type="match status" value="1"/>
</dbReference>
<dbReference type="FunFam" id="1.10.238.10:FF:000559">
    <property type="entry name" value="Calcium-binding EF-hand domain-containing protein"/>
    <property type="match status" value="1"/>
</dbReference>
<dbReference type="Gene3D" id="1.10.238.10">
    <property type="entry name" value="EF-hand"/>
    <property type="match status" value="1"/>
</dbReference>
<dbReference type="InterPro" id="IPR011992">
    <property type="entry name" value="EF-hand-dom_pair"/>
</dbReference>
<dbReference type="InterPro" id="IPR002048">
    <property type="entry name" value="EF_hand_dom"/>
</dbReference>
<dbReference type="Pfam" id="PF13499">
    <property type="entry name" value="EF-hand_7"/>
    <property type="match status" value="1"/>
</dbReference>
<dbReference type="SMART" id="SM00054">
    <property type="entry name" value="EFh"/>
    <property type="match status" value="2"/>
</dbReference>
<dbReference type="SUPFAM" id="SSF47473">
    <property type="entry name" value="EF-hand"/>
    <property type="match status" value="1"/>
</dbReference>
<dbReference type="PROSITE" id="PS50222">
    <property type="entry name" value="EF_HAND_2"/>
    <property type="match status" value="2"/>
</dbReference>
<feature type="chain" id="PRO_0000391643" description="Myosin-IB light chain">
    <location>
        <begin position="1"/>
        <end position="73"/>
    </location>
</feature>
<feature type="domain" description="EF-hand 1" evidence="2">
    <location>
        <begin position="3"/>
        <end position="38"/>
    </location>
</feature>
<feature type="domain" description="EF-hand 2" evidence="2">
    <location>
        <begin position="38"/>
        <end position="73"/>
    </location>
</feature>
<feature type="binding site" evidence="4">
    <location>
        <position position="16"/>
    </location>
    <ligand>
        <name>Ca(2+)</name>
        <dbReference type="ChEBI" id="CHEBI:29108"/>
    </ligand>
</feature>
<feature type="binding site" evidence="4">
    <location>
        <position position="18"/>
    </location>
    <ligand>
        <name>Ca(2+)</name>
        <dbReference type="ChEBI" id="CHEBI:29108"/>
    </ligand>
</feature>
<feature type="binding site" evidence="4">
    <location>
        <position position="20"/>
    </location>
    <ligand>
        <name>Ca(2+)</name>
        <dbReference type="ChEBI" id="CHEBI:29108"/>
    </ligand>
</feature>
<feature type="binding site" evidence="4">
    <location>
        <position position="27"/>
    </location>
    <ligand>
        <name>Ca(2+)</name>
        <dbReference type="ChEBI" id="CHEBI:29108"/>
    </ligand>
</feature>
<feature type="mutagenesis site" description="Unable to bind Ca(2+)." evidence="3">
    <original>D</original>
    <variation>A</variation>
    <location>
        <position position="16"/>
    </location>
</feature>
<comment type="function">
    <text evidence="3">Functions as the light chain for myosin-B. Binds calcium with submicromolar affinity and may sense physiological calcium changes.</text>
</comment>
<comment type="subunit">
    <text evidence="1 3">Myosin I is a dimer of a heavy and a light chain. Inability to self-assemble into filaments (By similarity). Interacts with myoB. Does not interact with myoC or myoD.</text>
</comment>
<accession>Q54GL7</accession>
<evidence type="ECO:0000250" key="1"/>
<evidence type="ECO:0000255" key="2">
    <source>
        <dbReference type="PROSITE-ProRule" id="PRU00448"/>
    </source>
</evidence>
<evidence type="ECO:0000269" key="3">
    <source>
    </source>
</evidence>
<evidence type="ECO:0000305" key="4"/>
<gene>
    <name type="primary">mlcB</name>
    <name type="ORF">DDB_G0290077</name>
</gene>